<proteinExistence type="inferred from homology"/>
<evidence type="ECO:0000255" key="1">
    <source>
        <dbReference type="HAMAP-Rule" id="MF_00197"/>
    </source>
</evidence>
<name>DAPF_METEP</name>
<sequence length="296" mass="31833">MSLLANRRFLKMHGAGNAIVVLDLRGTAVRVTPAEARAIAADVHSRFDQLMVVHDPVTPGTDAFMRIYNTDGSESGACGNGTRCVGYALLDDPAMARPAENGALTLETKAGLVAVKRITERSFTVDMGQPRLRWDEIPLAEPFLDTRRIELQVGPIDDPILHSPAAVSMGNPHAIFFVERDPDSYDLGRIGPLLEAHPIFPERANISIAEVTGRDTIKLRVWERGAGLTLACGTAACATVVAASRLRMIGRAARVALPGGELSIEWRADDHVLMTGPVYLEGEGTFSPDLFAGIDG</sequence>
<protein>
    <recommendedName>
        <fullName evidence="1">Diaminopimelate epimerase</fullName>
        <shortName evidence="1">DAP epimerase</shortName>
        <ecNumber evidence="1">5.1.1.7</ecNumber>
    </recommendedName>
    <alternativeName>
        <fullName evidence="1">PLP-independent amino acid racemase</fullName>
    </alternativeName>
</protein>
<organism>
    <name type="scientific">Methylorubrum extorquens (strain PA1)</name>
    <name type="common">Methylobacterium extorquens</name>
    <dbReference type="NCBI Taxonomy" id="419610"/>
    <lineage>
        <taxon>Bacteria</taxon>
        <taxon>Pseudomonadati</taxon>
        <taxon>Pseudomonadota</taxon>
        <taxon>Alphaproteobacteria</taxon>
        <taxon>Hyphomicrobiales</taxon>
        <taxon>Methylobacteriaceae</taxon>
        <taxon>Methylorubrum</taxon>
    </lineage>
</organism>
<comment type="function">
    <text evidence="1">Catalyzes the stereoinversion of LL-2,6-diaminopimelate (L,L-DAP) to meso-diaminopimelate (meso-DAP), a precursor of L-lysine and an essential component of the bacterial peptidoglycan.</text>
</comment>
<comment type="catalytic activity">
    <reaction evidence="1">
        <text>(2S,6S)-2,6-diaminopimelate = meso-2,6-diaminopimelate</text>
        <dbReference type="Rhea" id="RHEA:15393"/>
        <dbReference type="ChEBI" id="CHEBI:57609"/>
        <dbReference type="ChEBI" id="CHEBI:57791"/>
        <dbReference type="EC" id="5.1.1.7"/>
    </reaction>
</comment>
<comment type="pathway">
    <text evidence="1">Amino-acid biosynthesis; L-lysine biosynthesis via DAP pathway; DL-2,6-diaminopimelate from LL-2,6-diaminopimelate: step 1/1.</text>
</comment>
<comment type="subunit">
    <text evidence="1">Homodimer.</text>
</comment>
<comment type="subcellular location">
    <subcellularLocation>
        <location evidence="1">Cytoplasm</location>
    </subcellularLocation>
</comment>
<comment type="similarity">
    <text evidence="1">Belongs to the diaminopimelate epimerase family.</text>
</comment>
<feature type="chain" id="PRO_1000099245" description="Diaminopimelate epimerase">
    <location>
        <begin position="1"/>
        <end position="296"/>
    </location>
</feature>
<feature type="active site" description="Proton donor" evidence="1">
    <location>
        <position position="78"/>
    </location>
</feature>
<feature type="active site" description="Proton acceptor" evidence="1">
    <location>
        <position position="232"/>
    </location>
</feature>
<feature type="binding site" evidence="1">
    <location>
        <position position="17"/>
    </location>
    <ligand>
        <name>substrate</name>
    </ligand>
</feature>
<feature type="binding site" evidence="1">
    <location>
        <position position="49"/>
    </location>
    <ligand>
        <name>substrate</name>
    </ligand>
</feature>
<feature type="binding site" evidence="1">
    <location>
        <position position="69"/>
    </location>
    <ligand>
        <name>substrate</name>
    </ligand>
</feature>
<feature type="binding site" evidence="1">
    <location>
        <begin position="79"/>
        <end position="80"/>
    </location>
    <ligand>
        <name>substrate</name>
    </ligand>
</feature>
<feature type="binding site" evidence="1">
    <location>
        <position position="171"/>
    </location>
    <ligand>
        <name>substrate</name>
    </ligand>
</feature>
<feature type="binding site" evidence="1">
    <location>
        <position position="205"/>
    </location>
    <ligand>
        <name>substrate</name>
    </ligand>
</feature>
<feature type="binding site" evidence="1">
    <location>
        <begin position="223"/>
        <end position="224"/>
    </location>
    <ligand>
        <name>substrate</name>
    </ligand>
</feature>
<feature type="binding site" evidence="1">
    <location>
        <begin position="233"/>
        <end position="234"/>
    </location>
    <ligand>
        <name>substrate</name>
    </ligand>
</feature>
<feature type="site" description="Could be important to modulate the pK values of the two catalytic cysteine residues" evidence="1">
    <location>
        <position position="173"/>
    </location>
</feature>
<feature type="site" description="Could be important to modulate the pK values of the two catalytic cysteine residues" evidence="1">
    <location>
        <position position="223"/>
    </location>
</feature>
<gene>
    <name evidence="1" type="primary">dapF</name>
    <name type="ordered locus">Mext_2720</name>
</gene>
<dbReference type="EC" id="5.1.1.7" evidence="1"/>
<dbReference type="EMBL" id="CP000908">
    <property type="protein sequence ID" value="ABY31111.1"/>
    <property type="molecule type" value="Genomic_DNA"/>
</dbReference>
<dbReference type="RefSeq" id="WP_012254093.1">
    <property type="nucleotide sequence ID" value="NC_010172.1"/>
</dbReference>
<dbReference type="SMR" id="A9W6A5"/>
<dbReference type="KEGG" id="mex:Mext_2720"/>
<dbReference type="eggNOG" id="COG0253">
    <property type="taxonomic scope" value="Bacteria"/>
</dbReference>
<dbReference type="HOGENOM" id="CLU_053306_1_0_5"/>
<dbReference type="BioCyc" id="MEXT419610:MEXT_RS13715-MONOMER"/>
<dbReference type="UniPathway" id="UPA00034">
    <property type="reaction ID" value="UER00025"/>
</dbReference>
<dbReference type="GO" id="GO:0005829">
    <property type="term" value="C:cytosol"/>
    <property type="evidence" value="ECO:0007669"/>
    <property type="project" value="TreeGrafter"/>
</dbReference>
<dbReference type="GO" id="GO:0008837">
    <property type="term" value="F:diaminopimelate epimerase activity"/>
    <property type="evidence" value="ECO:0007669"/>
    <property type="project" value="UniProtKB-UniRule"/>
</dbReference>
<dbReference type="GO" id="GO:0009089">
    <property type="term" value="P:lysine biosynthetic process via diaminopimelate"/>
    <property type="evidence" value="ECO:0007669"/>
    <property type="project" value="UniProtKB-UniRule"/>
</dbReference>
<dbReference type="Gene3D" id="3.10.310.10">
    <property type="entry name" value="Diaminopimelate Epimerase, Chain A, domain 1"/>
    <property type="match status" value="2"/>
</dbReference>
<dbReference type="HAMAP" id="MF_00197">
    <property type="entry name" value="DAP_epimerase"/>
    <property type="match status" value="1"/>
</dbReference>
<dbReference type="InterPro" id="IPR018510">
    <property type="entry name" value="DAP_epimerase_AS"/>
</dbReference>
<dbReference type="InterPro" id="IPR001653">
    <property type="entry name" value="DAP_epimerase_DapF"/>
</dbReference>
<dbReference type="NCBIfam" id="TIGR00652">
    <property type="entry name" value="DapF"/>
    <property type="match status" value="1"/>
</dbReference>
<dbReference type="PANTHER" id="PTHR31689:SF0">
    <property type="entry name" value="DIAMINOPIMELATE EPIMERASE"/>
    <property type="match status" value="1"/>
</dbReference>
<dbReference type="PANTHER" id="PTHR31689">
    <property type="entry name" value="DIAMINOPIMELATE EPIMERASE, CHLOROPLASTIC"/>
    <property type="match status" value="1"/>
</dbReference>
<dbReference type="Pfam" id="PF01678">
    <property type="entry name" value="DAP_epimerase"/>
    <property type="match status" value="2"/>
</dbReference>
<dbReference type="SUPFAM" id="SSF54506">
    <property type="entry name" value="Diaminopimelate epimerase-like"/>
    <property type="match status" value="2"/>
</dbReference>
<dbReference type="PROSITE" id="PS01326">
    <property type="entry name" value="DAP_EPIMERASE"/>
    <property type="match status" value="1"/>
</dbReference>
<accession>A9W6A5</accession>
<reference key="1">
    <citation type="submission" date="2007-12" db="EMBL/GenBank/DDBJ databases">
        <title>Complete sequence of Methylobacterium extorquens PA1.</title>
        <authorList>
            <consortium name="US DOE Joint Genome Institute"/>
            <person name="Copeland A."/>
            <person name="Lucas S."/>
            <person name="Lapidus A."/>
            <person name="Barry K."/>
            <person name="Glavina del Rio T."/>
            <person name="Dalin E."/>
            <person name="Tice H."/>
            <person name="Pitluck S."/>
            <person name="Saunders E."/>
            <person name="Brettin T."/>
            <person name="Bruce D."/>
            <person name="Detter J.C."/>
            <person name="Han C."/>
            <person name="Schmutz J."/>
            <person name="Larimer F."/>
            <person name="Land M."/>
            <person name="Hauser L."/>
            <person name="Kyrpides N."/>
            <person name="Kim E."/>
            <person name="Marx C."/>
            <person name="Richardson P."/>
        </authorList>
    </citation>
    <scope>NUCLEOTIDE SEQUENCE [LARGE SCALE GENOMIC DNA]</scope>
    <source>
        <strain>PA1</strain>
    </source>
</reference>
<keyword id="KW-0028">Amino-acid biosynthesis</keyword>
<keyword id="KW-0963">Cytoplasm</keyword>
<keyword id="KW-0413">Isomerase</keyword>
<keyword id="KW-0457">Lysine biosynthesis</keyword>